<accession>P37465</accession>
<sequence length="664" mass="76188">MPQENNTFYITTPIYYPSGKLHIGHAYTTVAGDAMARYKRLKGFDVRYLTGTDEHGQKIQQKAEQENITPQEYVDRAAADIQKLWKQLEISNDDFIRTTEKRHKVVIEKVFQKLLDNGDIYLDEYEGWYSIPDETFYTETQLVDIERNEKGEVIGGKSPDSGHPVELIKEESYFFRMGKYADRLLKYYEENPTFIQPESRKNEMINNFIKPGLEDLAVSRTTFDWGVKVPENPKHVVYVWIDALFNYLTALGYDTENDELYQKYWPADVHLVGKEIVRFHTIYWPIMLMALDLPLPKQVFAHGWLLMKDGKMSKSKGNVVDPVTLIERYGLDELRYYLLREVPFGSDGVFTPEGFVERINYDLANDLGNLLNRTVAMINKYFDGQIGSYKGAVTEFDHTLTSVAEETVKAYEKAMENMEFSVALSTLWQLISRTNKYIDETAPWVLAKDPAKEEELRSVMYHLAESLRISAVLLQPFLTKTPEKMFEQLGITDESLKAWDSITAFGQLKDTKVQKGEPLFPRLEAEEEIAYIKGKMQGSAPAKEETKEEEPQEVDRLPEITIDQFMDVELRVAEVIEAEPVKKADRLLKLQLDLGFEKRQVVSGIAKHYTPEELVGKKLVCVTNLKPVKLRGELSQGMILAGEADGVLKVVSIDQSLPKGTRIK</sequence>
<feature type="chain" id="PRO_0000139211" description="Methionine--tRNA ligase">
    <location>
        <begin position="1"/>
        <end position="664"/>
    </location>
</feature>
<feature type="domain" description="tRNA-binding">
    <location>
        <begin position="570"/>
        <end position="662"/>
    </location>
</feature>
<feature type="region of interest" description="Disordered" evidence="2">
    <location>
        <begin position="536"/>
        <end position="556"/>
    </location>
</feature>
<feature type="short sequence motif" description="'HIGH' region">
    <location>
        <begin position="15"/>
        <end position="25"/>
    </location>
</feature>
<feature type="short sequence motif" description="'KMSKS' region">
    <location>
        <begin position="311"/>
        <end position="315"/>
    </location>
</feature>
<feature type="binding site" evidence="1">
    <location>
        <position position="314"/>
    </location>
    <ligand>
        <name>ATP</name>
        <dbReference type="ChEBI" id="CHEBI:30616"/>
    </ligand>
</feature>
<proteinExistence type="inferred from homology"/>
<reference key="1">
    <citation type="journal article" date="1994" name="DNA Res.">
        <title>Systematic sequencing of the 180 kilobase region of the Bacillus subtilis chromosome containing the replication origin.</title>
        <authorList>
            <person name="Ogasawara N."/>
            <person name="Nakai S."/>
            <person name="Yoshikawa H."/>
        </authorList>
    </citation>
    <scope>NUCLEOTIDE SEQUENCE [GENOMIC DNA]</scope>
    <source>
        <strain>168</strain>
    </source>
</reference>
<reference key="2">
    <citation type="journal article" date="1997" name="Nature">
        <title>The complete genome sequence of the Gram-positive bacterium Bacillus subtilis.</title>
        <authorList>
            <person name="Kunst F."/>
            <person name="Ogasawara N."/>
            <person name="Moszer I."/>
            <person name="Albertini A.M."/>
            <person name="Alloni G."/>
            <person name="Azevedo V."/>
            <person name="Bertero M.G."/>
            <person name="Bessieres P."/>
            <person name="Bolotin A."/>
            <person name="Borchert S."/>
            <person name="Borriss R."/>
            <person name="Boursier L."/>
            <person name="Brans A."/>
            <person name="Braun M."/>
            <person name="Brignell S.C."/>
            <person name="Bron S."/>
            <person name="Brouillet S."/>
            <person name="Bruschi C.V."/>
            <person name="Caldwell B."/>
            <person name="Capuano V."/>
            <person name="Carter N.M."/>
            <person name="Choi S.-K."/>
            <person name="Codani J.-J."/>
            <person name="Connerton I.F."/>
            <person name="Cummings N.J."/>
            <person name="Daniel R.A."/>
            <person name="Denizot F."/>
            <person name="Devine K.M."/>
            <person name="Duesterhoeft A."/>
            <person name="Ehrlich S.D."/>
            <person name="Emmerson P.T."/>
            <person name="Entian K.-D."/>
            <person name="Errington J."/>
            <person name="Fabret C."/>
            <person name="Ferrari E."/>
            <person name="Foulger D."/>
            <person name="Fritz C."/>
            <person name="Fujita M."/>
            <person name="Fujita Y."/>
            <person name="Fuma S."/>
            <person name="Galizzi A."/>
            <person name="Galleron N."/>
            <person name="Ghim S.-Y."/>
            <person name="Glaser P."/>
            <person name="Goffeau A."/>
            <person name="Golightly E.J."/>
            <person name="Grandi G."/>
            <person name="Guiseppi G."/>
            <person name="Guy B.J."/>
            <person name="Haga K."/>
            <person name="Haiech J."/>
            <person name="Harwood C.R."/>
            <person name="Henaut A."/>
            <person name="Hilbert H."/>
            <person name="Holsappel S."/>
            <person name="Hosono S."/>
            <person name="Hullo M.-F."/>
            <person name="Itaya M."/>
            <person name="Jones L.-M."/>
            <person name="Joris B."/>
            <person name="Karamata D."/>
            <person name="Kasahara Y."/>
            <person name="Klaerr-Blanchard M."/>
            <person name="Klein C."/>
            <person name="Kobayashi Y."/>
            <person name="Koetter P."/>
            <person name="Koningstein G."/>
            <person name="Krogh S."/>
            <person name="Kumano M."/>
            <person name="Kurita K."/>
            <person name="Lapidus A."/>
            <person name="Lardinois S."/>
            <person name="Lauber J."/>
            <person name="Lazarevic V."/>
            <person name="Lee S.-M."/>
            <person name="Levine A."/>
            <person name="Liu H."/>
            <person name="Masuda S."/>
            <person name="Mauel C."/>
            <person name="Medigue C."/>
            <person name="Medina N."/>
            <person name="Mellado R.P."/>
            <person name="Mizuno M."/>
            <person name="Moestl D."/>
            <person name="Nakai S."/>
            <person name="Noback M."/>
            <person name="Noone D."/>
            <person name="O'Reilly M."/>
            <person name="Ogawa K."/>
            <person name="Ogiwara A."/>
            <person name="Oudega B."/>
            <person name="Park S.-H."/>
            <person name="Parro V."/>
            <person name="Pohl T.M."/>
            <person name="Portetelle D."/>
            <person name="Porwollik S."/>
            <person name="Prescott A.M."/>
            <person name="Presecan E."/>
            <person name="Pujic P."/>
            <person name="Purnelle B."/>
            <person name="Rapoport G."/>
            <person name="Rey M."/>
            <person name="Reynolds S."/>
            <person name="Rieger M."/>
            <person name="Rivolta C."/>
            <person name="Rocha E."/>
            <person name="Roche B."/>
            <person name="Rose M."/>
            <person name="Sadaie Y."/>
            <person name="Sato T."/>
            <person name="Scanlan E."/>
            <person name="Schleich S."/>
            <person name="Schroeter R."/>
            <person name="Scoffone F."/>
            <person name="Sekiguchi J."/>
            <person name="Sekowska A."/>
            <person name="Seror S.J."/>
            <person name="Serror P."/>
            <person name="Shin B.-S."/>
            <person name="Soldo B."/>
            <person name="Sorokin A."/>
            <person name="Tacconi E."/>
            <person name="Takagi T."/>
            <person name="Takahashi H."/>
            <person name="Takemaru K."/>
            <person name="Takeuchi M."/>
            <person name="Tamakoshi A."/>
            <person name="Tanaka T."/>
            <person name="Terpstra P."/>
            <person name="Tognoni A."/>
            <person name="Tosato V."/>
            <person name="Uchiyama S."/>
            <person name="Vandenbol M."/>
            <person name="Vannier F."/>
            <person name="Vassarotti A."/>
            <person name="Viari A."/>
            <person name="Wambutt R."/>
            <person name="Wedler E."/>
            <person name="Wedler H."/>
            <person name="Weitzenegger T."/>
            <person name="Winters P."/>
            <person name="Wipat A."/>
            <person name="Yamamoto H."/>
            <person name="Yamane K."/>
            <person name="Yasumoto K."/>
            <person name="Yata K."/>
            <person name="Yoshida K."/>
            <person name="Yoshikawa H.-F."/>
            <person name="Zumstein E."/>
            <person name="Yoshikawa H."/>
            <person name="Danchin A."/>
        </authorList>
    </citation>
    <scope>NUCLEOTIDE SEQUENCE [LARGE SCALE GENOMIC DNA]</scope>
    <source>
        <strain>168</strain>
    </source>
</reference>
<name>SYM_BACSU</name>
<gene>
    <name type="primary">metG</name>
    <name type="synonym">metS</name>
    <name type="ordered locus">BSU00380</name>
</gene>
<organism>
    <name type="scientific">Bacillus subtilis (strain 168)</name>
    <dbReference type="NCBI Taxonomy" id="224308"/>
    <lineage>
        <taxon>Bacteria</taxon>
        <taxon>Bacillati</taxon>
        <taxon>Bacillota</taxon>
        <taxon>Bacilli</taxon>
        <taxon>Bacillales</taxon>
        <taxon>Bacillaceae</taxon>
        <taxon>Bacillus</taxon>
    </lineage>
</organism>
<keyword id="KW-0030">Aminoacyl-tRNA synthetase</keyword>
<keyword id="KW-0067">ATP-binding</keyword>
<keyword id="KW-0963">Cytoplasm</keyword>
<keyword id="KW-0436">Ligase</keyword>
<keyword id="KW-0547">Nucleotide-binding</keyword>
<keyword id="KW-0648">Protein biosynthesis</keyword>
<keyword id="KW-1185">Reference proteome</keyword>
<keyword id="KW-0694">RNA-binding</keyword>
<keyword id="KW-0820">tRNA-binding</keyword>
<dbReference type="EC" id="6.1.1.10"/>
<dbReference type="EMBL" id="D26185">
    <property type="protein sequence ID" value="BAA05273.1"/>
    <property type="molecule type" value="Genomic_DNA"/>
</dbReference>
<dbReference type="EMBL" id="AL009126">
    <property type="protein sequence ID" value="CAB11814.1"/>
    <property type="molecule type" value="Genomic_DNA"/>
</dbReference>
<dbReference type="PIR" id="S66067">
    <property type="entry name" value="S66067"/>
</dbReference>
<dbReference type="RefSeq" id="NP_387919.1">
    <property type="nucleotide sequence ID" value="NC_000964.3"/>
</dbReference>
<dbReference type="RefSeq" id="WP_003226758.1">
    <property type="nucleotide sequence ID" value="NZ_OZ025638.1"/>
</dbReference>
<dbReference type="SMR" id="P37465"/>
<dbReference type="FunCoup" id="P37465">
    <property type="interactions" value="643"/>
</dbReference>
<dbReference type="IntAct" id="P37465">
    <property type="interactions" value="3"/>
</dbReference>
<dbReference type="MINT" id="P37465"/>
<dbReference type="STRING" id="224308.BSU00380"/>
<dbReference type="jPOST" id="P37465"/>
<dbReference type="PaxDb" id="224308-BSU00380"/>
<dbReference type="EnsemblBacteria" id="CAB11814">
    <property type="protein sequence ID" value="CAB11814"/>
    <property type="gene ID" value="BSU_00380"/>
</dbReference>
<dbReference type="GeneID" id="936877"/>
<dbReference type="KEGG" id="bsu:BSU00380"/>
<dbReference type="PATRIC" id="fig|224308.179.peg.38"/>
<dbReference type="eggNOG" id="COG0073">
    <property type="taxonomic scope" value="Bacteria"/>
</dbReference>
<dbReference type="eggNOG" id="COG0143">
    <property type="taxonomic scope" value="Bacteria"/>
</dbReference>
<dbReference type="InParanoid" id="P37465"/>
<dbReference type="OrthoDB" id="9810191at2"/>
<dbReference type="PhylomeDB" id="P37465"/>
<dbReference type="BioCyc" id="BSUB:BSU00380-MONOMER"/>
<dbReference type="Proteomes" id="UP000001570">
    <property type="component" value="Chromosome"/>
</dbReference>
<dbReference type="GO" id="GO:0005737">
    <property type="term" value="C:cytoplasm"/>
    <property type="evidence" value="ECO:0007669"/>
    <property type="project" value="UniProtKB-SubCell"/>
</dbReference>
<dbReference type="GO" id="GO:0005524">
    <property type="term" value="F:ATP binding"/>
    <property type="evidence" value="ECO:0007669"/>
    <property type="project" value="UniProtKB-UniRule"/>
</dbReference>
<dbReference type="GO" id="GO:0004825">
    <property type="term" value="F:methionine-tRNA ligase activity"/>
    <property type="evidence" value="ECO:0000318"/>
    <property type="project" value="GO_Central"/>
</dbReference>
<dbReference type="GO" id="GO:0000049">
    <property type="term" value="F:tRNA binding"/>
    <property type="evidence" value="ECO:0007669"/>
    <property type="project" value="UniProtKB-KW"/>
</dbReference>
<dbReference type="GO" id="GO:0006431">
    <property type="term" value="P:methionyl-tRNA aminoacylation"/>
    <property type="evidence" value="ECO:0000318"/>
    <property type="project" value="GO_Central"/>
</dbReference>
<dbReference type="CDD" id="cd07957">
    <property type="entry name" value="Anticodon_Ia_Met"/>
    <property type="match status" value="1"/>
</dbReference>
<dbReference type="CDD" id="cd00814">
    <property type="entry name" value="MetRS_core"/>
    <property type="match status" value="1"/>
</dbReference>
<dbReference type="CDD" id="cd02800">
    <property type="entry name" value="tRNA_bind_EcMetRS_like"/>
    <property type="match status" value="1"/>
</dbReference>
<dbReference type="FunFam" id="1.10.730.10:FF:000026">
    <property type="entry name" value="Methionine--tRNA ligase"/>
    <property type="match status" value="1"/>
</dbReference>
<dbReference type="FunFam" id="2.170.220.10:FF:000002">
    <property type="entry name" value="Methionine--tRNA ligase"/>
    <property type="match status" value="1"/>
</dbReference>
<dbReference type="FunFam" id="2.40.50.140:FF:000042">
    <property type="entry name" value="Methionine--tRNA ligase"/>
    <property type="match status" value="1"/>
</dbReference>
<dbReference type="Gene3D" id="2.170.220.10">
    <property type="match status" value="1"/>
</dbReference>
<dbReference type="Gene3D" id="3.40.50.620">
    <property type="entry name" value="HUPs"/>
    <property type="match status" value="1"/>
</dbReference>
<dbReference type="Gene3D" id="1.10.730.10">
    <property type="entry name" value="Isoleucyl-tRNA Synthetase, Domain 1"/>
    <property type="match status" value="1"/>
</dbReference>
<dbReference type="Gene3D" id="2.40.50.140">
    <property type="entry name" value="Nucleic acid-binding proteins"/>
    <property type="match status" value="1"/>
</dbReference>
<dbReference type="HAMAP" id="MF_01228">
    <property type="entry name" value="Met_tRNA_synth_type2"/>
    <property type="match status" value="1"/>
</dbReference>
<dbReference type="InterPro" id="IPR001412">
    <property type="entry name" value="aa-tRNA-synth_I_CS"/>
</dbReference>
<dbReference type="InterPro" id="IPR041872">
    <property type="entry name" value="Anticodon_Met"/>
</dbReference>
<dbReference type="InterPro" id="IPR004495">
    <property type="entry name" value="Met-tRNA-synth_bsu_C"/>
</dbReference>
<dbReference type="InterPro" id="IPR014758">
    <property type="entry name" value="Met-tRNA_synth"/>
</dbReference>
<dbReference type="InterPro" id="IPR023457">
    <property type="entry name" value="Met-tRNA_synth_2"/>
</dbReference>
<dbReference type="InterPro" id="IPR015413">
    <property type="entry name" value="Methionyl/Leucyl_tRNA_Synth"/>
</dbReference>
<dbReference type="InterPro" id="IPR033911">
    <property type="entry name" value="MetRS_core"/>
</dbReference>
<dbReference type="InterPro" id="IPR012340">
    <property type="entry name" value="NA-bd_OB-fold"/>
</dbReference>
<dbReference type="InterPro" id="IPR014729">
    <property type="entry name" value="Rossmann-like_a/b/a_fold"/>
</dbReference>
<dbReference type="InterPro" id="IPR002547">
    <property type="entry name" value="tRNA-bd_dom"/>
</dbReference>
<dbReference type="InterPro" id="IPR009080">
    <property type="entry name" value="tRNAsynth_Ia_anticodon-bd"/>
</dbReference>
<dbReference type="NCBIfam" id="TIGR00398">
    <property type="entry name" value="metG"/>
    <property type="match status" value="1"/>
</dbReference>
<dbReference type="NCBIfam" id="TIGR00399">
    <property type="entry name" value="metG_C_term"/>
    <property type="match status" value="1"/>
</dbReference>
<dbReference type="NCBIfam" id="NF008900">
    <property type="entry name" value="PRK12267.1"/>
    <property type="match status" value="1"/>
</dbReference>
<dbReference type="PANTHER" id="PTHR43326:SF1">
    <property type="entry name" value="METHIONINE--TRNA LIGASE, MITOCHONDRIAL"/>
    <property type="match status" value="1"/>
</dbReference>
<dbReference type="PANTHER" id="PTHR43326">
    <property type="entry name" value="METHIONYL-TRNA SYNTHETASE"/>
    <property type="match status" value="1"/>
</dbReference>
<dbReference type="Pfam" id="PF19303">
    <property type="entry name" value="Anticodon_3"/>
    <property type="match status" value="1"/>
</dbReference>
<dbReference type="Pfam" id="PF09334">
    <property type="entry name" value="tRNA-synt_1g"/>
    <property type="match status" value="1"/>
</dbReference>
<dbReference type="Pfam" id="PF01588">
    <property type="entry name" value="tRNA_bind"/>
    <property type="match status" value="1"/>
</dbReference>
<dbReference type="PRINTS" id="PR01041">
    <property type="entry name" value="TRNASYNTHMET"/>
</dbReference>
<dbReference type="SUPFAM" id="SSF47323">
    <property type="entry name" value="Anticodon-binding domain of a subclass of class I aminoacyl-tRNA synthetases"/>
    <property type="match status" value="1"/>
</dbReference>
<dbReference type="SUPFAM" id="SSF50249">
    <property type="entry name" value="Nucleic acid-binding proteins"/>
    <property type="match status" value="1"/>
</dbReference>
<dbReference type="SUPFAM" id="SSF52374">
    <property type="entry name" value="Nucleotidylyl transferase"/>
    <property type="match status" value="1"/>
</dbReference>
<dbReference type="PROSITE" id="PS00178">
    <property type="entry name" value="AA_TRNA_LIGASE_I"/>
    <property type="match status" value="1"/>
</dbReference>
<dbReference type="PROSITE" id="PS50886">
    <property type="entry name" value="TRBD"/>
    <property type="match status" value="1"/>
</dbReference>
<evidence type="ECO:0000250" key="1"/>
<evidence type="ECO:0000256" key="2">
    <source>
        <dbReference type="SAM" id="MobiDB-lite"/>
    </source>
</evidence>
<evidence type="ECO:0000305" key="3"/>
<comment type="function">
    <text evidence="1">Is required not only for elongation of protein synthesis but also for the initiation of all mRNA translation through initiator tRNA(fMet) aminoacylation.</text>
</comment>
<comment type="catalytic activity">
    <reaction>
        <text>tRNA(Met) + L-methionine + ATP = L-methionyl-tRNA(Met) + AMP + diphosphate</text>
        <dbReference type="Rhea" id="RHEA:13481"/>
        <dbReference type="Rhea" id="RHEA-COMP:9667"/>
        <dbReference type="Rhea" id="RHEA-COMP:9698"/>
        <dbReference type="ChEBI" id="CHEBI:30616"/>
        <dbReference type="ChEBI" id="CHEBI:33019"/>
        <dbReference type="ChEBI" id="CHEBI:57844"/>
        <dbReference type="ChEBI" id="CHEBI:78442"/>
        <dbReference type="ChEBI" id="CHEBI:78530"/>
        <dbReference type="ChEBI" id="CHEBI:456215"/>
        <dbReference type="EC" id="6.1.1.10"/>
    </reaction>
</comment>
<comment type="subunit">
    <text evidence="1">Homodimer.</text>
</comment>
<comment type="subcellular location">
    <subcellularLocation>
        <location>Cytoplasm</location>
    </subcellularLocation>
</comment>
<comment type="similarity">
    <text evidence="3">Belongs to the class-I aminoacyl-tRNA synthetase family. MetG type 2B subfamily.</text>
</comment>
<protein>
    <recommendedName>
        <fullName>Methionine--tRNA ligase</fullName>
        <ecNumber>6.1.1.10</ecNumber>
    </recommendedName>
    <alternativeName>
        <fullName>Methionyl-tRNA synthetase</fullName>
        <shortName>MetRS</shortName>
    </alternativeName>
</protein>